<gene>
    <name evidence="3" type="primary">GW2</name>
    <name evidence="6" type="ordered locus">Os02g0244100</name>
    <name evidence="4" type="ordered locus">LOC_Os02g14720</name>
    <name evidence="7" type="ORF">OsJ_06048</name>
    <name evidence="5" type="ORF">P0503B05.32</name>
</gene>
<dbReference type="EC" id="2.3.2.27" evidence="2"/>
<dbReference type="EMBL" id="CM000139">
    <property type="protein sequence ID" value="EEE56640.1"/>
    <property type="molecule type" value="Genomic_DNA"/>
</dbReference>
<dbReference type="EMBL" id="AP005004">
    <property type="protein sequence ID" value="BAD28268.1"/>
    <property type="status" value="ALT_SEQ"/>
    <property type="molecule type" value="Genomic_DNA"/>
</dbReference>
<dbReference type="EMBL" id="AP014958">
    <property type="protein sequence ID" value="BAS77855.1"/>
    <property type="status" value="ALT_SEQ"/>
    <property type="molecule type" value="Genomic_DNA"/>
</dbReference>
<dbReference type="EMBL" id="AP008208">
    <property type="protein sequence ID" value="BAF08328.1"/>
    <property type="status" value="ALT_SEQ"/>
    <property type="molecule type" value="Genomic_DNA"/>
</dbReference>
<dbReference type="RefSeq" id="XP_015627677.1">
    <property type="nucleotide sequence ID" value="XM_015772191.1"/>
</dbReference>
<dbReference type="FunCoup" id="B9F4Q9">
    <property type="interactions" value="997"/>
</dbReference>
<dbReference type="STRING" id="39947.B9F4Q9"/>
<dbReference type="PaxDb" id="39947-B9F4Q9"/>
<dbReference type="KEGG" id="dosa:Os02g0244100"/>
<dbReference type="eggNOG" id="KOG2789">
    <property type="taxonomic scope" value="Eukaryota"/>
</dbReference>
<dbReference type="HOGENOM" id="CLU_032010_0_0_1"/>
<dbReference type="InParanoid" id="B9F4Q9"/>
<dbReference type="OrthoDB" id="21471at2759"/>
<dbReference type="PlantReactome" id="R-OSA-9035605">
    <property type="pathway name" value="Regulation of seed size"/>
</dbReference>
<dbReference type="UniPathway" id="UPA00143"/>
<dbReference type="Proteomes" id="UP000000763">
    <property type="component" value="Chromosome 2"/>
</dbReference>
<dbReference type="Proteomes" id="UP000007752">
    <property type="component" value="Chromosome 2"/>
</dbReference>
<dbReference type="Proteomes" id="UP000059680">
    <property type="component" value="Chromosome 2"/>
</dbReference>
<dbReference type="GO" id="GO:0005737">
    <property type="term" value="C:cytoplasm"/>
    <property type="evidence" value="ECO:0007669"/>
    <property type="project" value="UniProtKB-SubCell"/>
</dbReference>
<dbReference type="GO" id="GO:0061630">
    <property type="term" value="F:ubiquitin protein ligase activity"/>
    <property type="evidence" value="ECO:0000314"/>
    <property type="project" value="UniProtKB"/>
</dbReference>
<dbReference type="GO" id="GO:0008270">
    <property type="term" value="F:zinc ion binding"/>
    <property type="evidence" value="ECO:0007669"/>
    <property type="project" value="UniProtKB-KW"/>
</dbReference>
<dbReference type="GO" id="GO:0016567">
    <property type="term" value="P:protein ubiquitination"/>
    <property type="evidence" value="ECO:0000314"/>
    <property type="project" value="UniProtKB"/>
</dbReference>
<dbReference type="GO" id="GO:0080113">
    <property type="term" value="P:regulation of seed growth"/>
    <property type="evidence" value="ECO:0000315"/>
    <property type="project" value="UniProtKB"/>
</dbReference>
<dbReference type="InterPro" id="IPR039301">
    <property type="entry name" value="Sip5/DA2"/>
</dbReference>
<dbReference type="InterPro" id="IPR001841">
    <property type="entry name" value="Znf_RING"/>
</dbReference>
<dbReference type="PANTHER" id="PTHR31315">
    <property type="entry name" value="PROTEIN SIP5"/>
    <property type="match status" value="1"/>
</dbReference>
<dbReference type="PANTHER" id="PTHR31315:SF1">
    <property type="entry name" value="PROTEIN SIP5"/>
    <property type="match status" value="1"/>
</dbReference>
<dbReference type="SUPFAM" id="SSF57850">
    <property type="entry name" value="RING/U-box"/>
    <property type="match status" value="1"/>
</dbReference>
<dbReference type="PROSITE" id="PS50089">
    <property type="entry name" value="ZF_RING_2"/>
    <property type="match status" value="1"/>
</dbReference>
<comment type="function">
    <text evidence="2">E3 ubiquitin-protein ligase involved in the regulation of grain size. May limit grain width and weight by restricting cell proliferation of the spikelet hull. Possesses E3 ubiquitin-protein ligase activity in vitro.</text>
</comment>
<comment type="catalytic activity">
    <reaction evidence="2">
        <text>S-ubiquitinyl-[E2 ubiquitin-conjugating enzyme]-L-cysteine + [acceptor protein]-L-lysine = [E2 ubiquitin-conjugating enzyme]-L-cysteine + N(6)-ubiquitinyl-[acceptor protein]-L-lysine.</text>
        <dbReference type="EC" id="2.3.2.27"/>
    </reaction>
</comment>
<comment type="pathway">
    <text evidence="4">Protein modification; protein ubiquitination.</text>
</comment>
<comment type="subcellular location">
    <subcellularLocation>
        <location evidence="2">Cytoplasm</location>
    </subcellularLocation>
</comment>
<comment type="tissue specificity">
    <text evidence="2">Expressed in roots, shoots, leaves, inflorescence meristems, stamens, pistils, spikelet hulls and endosperms 4 days after fertilization.</text>
</comment>
<comment type="miscellaneous">
    <text evidence="2">Plants silencing GW2 produce grains with increased width, resulting in enhanced grain weight, whereas overexpression of GW2 decreases grain size and weight. The naturally occurring WY3 allele of GW2, which encodes a truncated version of the protein with a 310-amino acid deletion, increases the number of cells of the spikelet hull, resulting in a wider spikelet hull, and subsequently accelerates the grain milk filling rate, resulting in increased grain width, weight and yield.</text>
</comment>
<comment type="sequence caution" evidence="4">
    <conflict type="erroneous gene model prediction">
        <sequence resource="EMBL-CDS" id="BAD28268"/>
    </conflict>
</comment>
<comment type="sequence caution" evidence="4">
    <conflict type="erroneous gene model prediction">
        <sequence resource="EMBL-CDS" id="BAF08328"/>
    </conflict>
</comment>
<comment type="sequence caution" evidence="4">
    <conflict type="erroneous gene model prediction">
        <sequence resource="EMBL-CDS" id="BAS77855"/>
    </conflict>
</comment>
<keyword id="KW-0963">Cytoplasm</keyword>
<keyword id="KW-0217">Developmental protein</keyword>
<keyword id="KW-0479">Metal-binding</keyword>
<keyword id="KW-1185">Reference proteome</keyword>
<keyword id="KW-0808">Transferase</keyword>
<keyword id="KW-0833">Ubl conjugation pathway</keyword>
<keyword id="KW-0862">Zinc</keyword>
<keyword id="KW-0863">Zinc-finger</keyword>
<organism>
    <name type="scientific">Oryza sativa subsp. japonica</name>
    <name type="common">Rice</name>
    <dbReference type="NCBI Taxonomy" id="39947"/>
    <lineage>
        <taxon>Eukaryota</taxon>
        <taxon>Viridiplantae</taxon>
        <taxon>Streptophyta</taxon>
        <taxon>Embryophyta</taxon>
        <taxon>Tracheophyta</taxon>
        <taxon>Spermatophyta</taxon>
        <taxon>Magnoliopsida</taxon>
        <taxon>Liliopsida</taxon>
        <taxon>Poales</taxon>
        <taxon>Poaceae</taxon>
        <taxon>BOP clade</taxon>
        <taxon>Oryzoideae</taxon>
        <taxon>Oryzeae</taxon>
        <taxon>Oryzinae</taxon>
        <taxon>Oryza</taxon>
        <taxon>Oryza sativa</taxon>
    </lineage>
</organism>
<proteinExistence type="evidence at protein level"/>
<name>GW2_ORYSJ</name>
<evidence type="ECO:0000255" key="1">
    <source>
        <dbReference type="PROSITE-ProRule" id="PRU00175"/>
    </source>
</evidence>
<evidence type="ECO:0000269" key="2">
    <source>
    </source>
</evidence>
<evidence type="ECO:0000303" key="3">
    <source>
    </source>
</evidence>
<evidence type="ECO:0000305" key="4"/>
<evidence type="ECO:0000312" key="5">
    <source>
        <dbReference type="EMBL" id="BAD28268.1"/>
    </source>
</evidence>
<evidence type="ECO:0000312" key="6">
    <source>
        <dbReference type="EMBL" id="BAF08328.1"/>
    </source>
</evidence>
<evidence type="ECO:0000312" key="7">
    <source>
        <dbReference type="EMBL" id="EEE56640.1"/>
    </source>
</evidence>
<reference key="1">
    <citation type="journal article" date="2005" name="Nature">
        <title>The map-based sequence of the rice genome.</title>
        <authorList>
            <consortium name="International rice genome sequencing project (IRGSP)"/>
        </authorList>
    </citation>
    <scope>NUCLEOTIDE SEQUENCE [LARGE SCALE GENOMIC DNA]</scope>
    <source>
        <strain>cv. Nipponbare</strain>
    </source>
</reference>
<reference key="2">
    <citation type="journal article" date="2005" name="PLoS Biol.">
        <title>The genomes of Oryza sativa: a history of duplications.</title>
        <authorList>
            <person name="Yu J."/>
            <person name="Wang J."/>
            <person name="Lin W."/>
            <person name="Li S."/>
            <person name="Li H."/>
            <person name="Zhou J."/>
            <person name="Ni P."/>
            <person name="Dong W."/>
            <person name="Hu S."/>
            <person name="Zeng C."/>
            <person name="Zhang J."/>
            <person name="Zhang Y."/>
            <person name="Li R."/>
            <person name="Xu Z."/>
            <person name="Li S."/>
            <person name="Li X."/>
            <person name="Zheng H."/>
            <person name="Cong L."/>
            <person name="Lin L."/>
            <person name="Yin J."/>
            <person name="Geng J."/>
            <person name="Li G."/>
            <person name="Shi J."/>
            <person name="Liu J."/>
            <person name="Lv H."/>
            <person name="Li J."/>
            <person name="Wang J."/>
            <person name="Deng Y."/>
            <person name="Ran L."/>
            <person name="Shi X."/>
            <person name="Wang X."/>
            <person name="Wu Q."/>
            <person name="Li C."/>
            <person name="Ren X."/>
            <person name="Wang J."/>
            <person name="Wang X."/>
            <person name="Li D."/>
            <person name="Liu D."/>
            <person name="Zhang X."/>
            <person name="Ji Z."/>
            <person name="Zhao W."/>
            <person name="Sun Y."/>
            <person name="Zhang Z."/>
            <person name="Bao J."/>
            <person name="Han Y."/>
            <person name="Dong L."/>
            <person name="Ji J."/>
            <person name="Chen P."/>
            <person name="Wu S."/>
            <person name="Liu J."/>
            <person name="Xiao Y."/>
            <person name="Bu D."/>
            <person name="Tan J."/>
            <person name="Yang L."/>
            <person name="Ye C."/>
            <person name="Zhang J."/>
            <person name="Xu J."/>
            <person name="Zhou Y."/>
            <person name="Yu Y."/>
            <person name="Zhang B."/>
            <person name="Zhuang S."/>
            <person name="Wei H."/>
            <person name="Liu B."/>
            <person name="Lei M."/>
            <person name="Yu H."/>
            <person name="Li Y."/>
            <person name="Xu H."/>
            <person name="Wei S."/>
            <person name="He X."/>
            <person name="Fang L."/>
            <person name="Zhang Z."/>
            <person name="Zhang Y."/>
            <person name="Huang X."/>
            <person name="Su Z."/>
            <person name="Tong W."/>
            <person name="Li J."/>
            <person name="Tong Z."/>
            <person name="Li S."/>
            <person name="Ye J."/>
            <person name="Wang L."/>
            <person name="Fang L."/>
            <person name="Lei T."/>
            <person name="Chen C.-S."/>
            <person name="Chen H.-C."/>
            <person name="Xu Z."/>
            <person name="Li H."/>
            <person name="Huang H."/>
            <person name="Zhang F."/>
            <person name="Xu H."/>
            <person name="Li N."/>
            <person name="Zhao C."/>
            <person name="Li S."/>
            <person name="Dong L."/>
            <person name="Huang Y."/>
            <person name="Li L."/>
            <person name="Xi Y."/>
            <person name="Qi Q."/>
            <person name="Li W."/>
            <person name="Zhang B."/>
            <person name="Hu W."/>
            <person name="Zhang Y."/>
            <person name="Tian X."/>
            <person name="Jiao Y."/>
            <person name="Liang X."/>
            <person name="Jin J."/>
            <person name="Gao L."/>
            <person name="Zheng W."/>
            <person name="Hao B."/>
            <person name="Liu S.-M."/>
            <person name="Wang W."/>
            <person name="Yuan L."/>
            <person name="Cao M."/>
            <person name="McDermott J."/>
            <person name="Samudrala R."/>
            <person name="Wang J."/>
            <person name="Wong G.K.-S."/>
            <person name="Yang H."/>
        </authorList>
    </citation>
    <scope>NUCLEOTIDE SEQUENCE [LARGE SCALE GENOMIC DNA]</scope>
    <source>
        <strain>cv. Nipponbare</strain>
    </source>
</reference>
<reference key="3">
    <citation type="journal article" date="2008" name="Nucleic Acids Res.">
        <title>The rice annotation project database (RAP-DB): 2008 update.</title>
        <authorList>
            <consortium name="The rice annotation project (RAP)"/>
        </authorList>
    </citation>
    <scope>GENOME REANNOTATION</scope>
    <source>
        <strain>cv. Nipponbare</strain>
    </source>
</reference>
<reference key="4">
    <citation type="journal article" date="2013" name="Rice">
        <title>Improvement of the Oryza sativa Nipponbare reference genome using next generation sequence and optical map data.</title>
        <authorList>
            <person name="Kawahara Y."/>
            <person name="de la Bastide M."/>
            <person name="Hamilton J.P."/>
            <person name="Kanamori H."/>
            <person name="McCombie W.R."/>
            <person name="Ouyang S."/>
            <person name="Schwartz D.C."/>
            <person name="Tanaka T."/>
            <person name="Wu J."/>
            <person name="Zhou S."/>
            <person name="Childs K.L."/>
            <person name="Davidson R.M."/>
            <person name="Lin H."/>
            <person name="Quesada-Ocampo L."/>
            <person name="Vaillancourt B."/>
            <person name="Sakai H."/>
            <person name="Lee S.S."/>
            <person name="Kim J."/>
            <person name="Numa H."/>
            <person name="Itoh T."/>
            <person name="Buell C.R."/>
            <person name="Matsumoto T."/>
        </authorList>
    </citation>
    <scope>GENOME REANNOTATION</scope>
    <source>
        <strain>cv. Nipponbare</strain>
    </source>
</reference>
<reference key="5">
    <citation type="journal article" date="2007" name="Nat. Genet.">
        <title>A QTL for rice grain width and weight encodes a previously unknown RING-type E3 ubiquitin ligase.</title>
        <authorList>
            <person name="Song X.J."/>
            <person name="Huang W."/>
            <person name="Shi M."/>
            <person name="Zhu M.Z."/>
            <person name="Lin H.X."/>
        </authorList>
    </citation>
    <scope>FUNCTION</scope>
    <scope>CATALYTIC ACTIVITY</scope>
    <scope>SUBCELLULAR LOCATION</scope>
    <scope>TISSUE SPECIFICITY</scope>
</reference>
<sequence length="425" mass="47399">MGNRIGGRRKAGVEERYTRPQGLYEHRDIDQKKLRKLILEAKLAPCYMGADDAAAAADLEECPICFLYYPSLNRSKCCSKGICTECFLQMKPTHTAQPTQCPFCKTPSYAVEYRGVKTKEERSIEQFEEQKVIEAQMRMRQQALQDEEDKMKRKQNRCSSSRTITPTKEVEYRDICSTSFSVPSYRCAEQETECCSSEPSCSAQTSMRPFHSRHNRDDNIDMNIEDMMVMEAIWRSIQEQGSIGNPVCGNFMPVTEPSPRERQPFVPAASLEIPHGGGFSCAVAAMAEHQPPSMDFSYMAGSSAFPVFDMFRRPCNIAGGSMCNLESSPESWSGIAPSCSREVVREEGECSADHWSEGAEAGTSYAGSDIVADAGTMPQLPFAENFAMAPSHFRPESIEEQMMFSMALSLADGHGRTHSQGLAWL</sequence>
<feature type="chain" id="PRO_0000444876" description="E3 ubiquitin-protein ligase GW2">
    <location>
        <begin position="1"/>
        <end position="425"/>
    </location>
</feature>
<feature type="zinc finger region" description="RING-type; degenerate" evidence="1">
    <location>
        <begin position="62"/>
        <end position="105"/>
    </location>
</feature>
<accession>B9F4Q9</accession>
<accession>Q6ESV2</accession>
<protein>
    <recommendedName>
        <fullName evidence="4">E3 ubiquitin-protein ligase GW2</fullName>
        <ecNumber evidence="2">2.3.2.27</ecNumber>
    </recommendedName>
    <alternativeName>
        <fullName evidence="3">Protein GRAIN WIDTH AND WEIGHT 2</fullName>
    </alternativeName>
    <alternativeName>
        <fullName evidence="4">RING-type E3 ubiquitin transferase GW2</fullName>
    </alternativeName>
</protein>